<evidence type="ECO:0000250" key="1"/>
<evidence type="ECO:0000305" key="2"/>
<evidence type="ECO:0000312" key="3">
    <source>
        <dbReference type="EMBL" id="AAY54695.1"/>
    </source>
</evidence>
<evidence type="ECO:0000312" key="4">
    <source>
        <dbReference type="FlyBase" id="FBgn0050157"/>
    </source>
</evidence>
<evidence type="ECO:0000312" key="5">
    <source>
        <dbReference type="Proteomes" id="UP000000803"/>
    </source>
</evidence>
<protein>
    <recommendedName>
        <fullName>Probable Ufm1-specific protease 1</fullName>
        <shortName>UfSP1</shortName>
        <ecNumber>3.4.22.-</ecNumber>
    </recommendedName>
</protein>
<name>UFSP1_DROME</name>
<reference evidence="5" key="1">
    <citation type="journal article" date="2000" name="Science">
        <title>The genome sequence of Drosophila melanogaster.</title>
        <authorList>
            <person name="Adams M.D."/>
            <person name="Celniker S.E."/>
            <person name="Holt R.A."/>
            <person name="Evans C.A."/>
            <person name="Gocayne J.D."/>
            <person name="Amanatides P.G."/>
            <person name="Scherer S.E."/>
            <person name="Li P.W."/>
            <person name="Hoskins R.A."/>
            <person name="Galle R.F."/>
            <person name="George R.A."/>
            <person name="Lewis S.E."/>
            <person name="Richards S."/>
            <person name="Ashburner M."/>
            <person name="Henderson S.N."/>
            <person name="Sutton G.G."/>
            <person name="Wortman J.R."/>
            <person name="Yandell M.D."/>
            <person name="Zhang Q."/>
            <person name="Chen L.X."/>
            <person name="Brandon R.C."/>
            <person name="Rogers Y.-H.C."/>
            <person name="Blazej R.G."/>
            <person name="Champe M."/>
            <person name="Pfeiffer B.D."/>
            <person name="Wan K.H."/>
            <person name="Doyle C."/>
            <person name="Baxter E.G."/>
            <person name="Helt G."/>
            <person name="Nelson C.R."/>
            <person name="Miklos G.L.G."/>
            <person name="Abril J.F."/>
            <person name="Agbayani A."/>
            <person name="An H.-J."/>
            <person name="Andrews-Pfannkoch C."/>
            <person name="Baldwin D."/>
            <person name="Ballew R.M."/>
            <person name="Basu A."/>
            <person name="Baxendale J."/>
            <person name="Bayraktaroglu L."/>
            <person name="Beasley E.M."/>
            <person name="Beeson K.Y."/>
            <person name="Benos P.V."/>
            <person name="Berman B.P."/>
            <person name="Bhandari D."/>
            <person name="Bolshakov S."/>
            <person name="Borkova D."/>
            <person name="Botchan M.R."/>
            <person name="Bouck J."/>
            <person name="Brokstein P."/>
            <person name="Brottier P."/>
            <person name="Burtis K.C."/>
            <person name="Busam D.A."/>
            <person name="Butler H."/>
            <person name="Cadieu E."/>
            <person name="Center A."/>
            <person name="Chandra I."/>
            <person name="Cherry J.M."/>
            <person name="Cawley S."/>
            <person name="Dahlke C."/>
            <person name="Davenport L.B."/>
            <person name="Davies P."/>
            <person name="de Pablos B."/>
            <person name="Delcher A."/>
            <person name="Deng Z."/>
            <person name="Mays A.D."/>
            <person name="Dew I."/>
            <person name="Dietz S.M."/>
            <person name="Dodson K."/>
            <person name="Doup L.E."/>
            <person name="Downes M."/>
            <person name="Dugan-Rocha S."/>
            <person name="Dunkov B.C."/>
            <person name="Dunn P."/>
            <person name="Durbin K.J."/>
            <person name="Evangelista C.C."/>
            <person name="Ferraz C."/>
            <person name="Ferriera S."/>
            <person name="Fleischmann W."/>
            <person name="Fosler C."/>
            <person name="Gabrielian A.E."/>
            <person name="Garg N.S."/>
            <person name="Gelbart W.M."/>
            <person name="Glasser K."/>
            <person name="Glodek A."/>
            <person name="Gong F."/>
            <person name="Gorrell J.H."/>
            <person name="Gu Z."/>
            <person name="Guan P."/>
            <person name="Harris M."/>
            <person name="Harris N.L."/>
            <person name="Harvey D.A."/>
            <person name="Heiman T.J."/>
            <person name="Hernandez J.R."/>
            <person name="Houck J."/>
            <person name="Hostin D."/>
            <person name="Houston K.A."/>
            <person name="Howland T.J."/>
            <person name="Wei M.-H."/>
            <person name="Ibegwam C."/>
            <person name="Jalali M."/>
            <person name="Kalush F."/>
            <person name="Karpen G.H."/>
            <person name="Ke Z."/>
            <person name="Kennison J.A."/>
            <person name="Ketchum K.A."/>
            <person name="Kimmel B.E."/>
            <person name="Kodira C.D."/>
            <person name="Kraft C.L."/>
            <person name="Kravitz S."/>
            <person name="Kulp D."/>
            <person name="Lai Z."/>
            <person name="Lasko P."/>
            <person name="Lei Y."/>
            <person name="Levitsky A.A."/>
            <person name="Li J.H."/>
            <person name="Li Z."/>
            <person name="Liang Y."/>
            <person name="Lin X."/>
            <person name="Liu X."/>
            <person name="Mattei B."/>
            <person name="McIntosh T.C."/>
            <person name="McLeod M.P."/>
            <person name="McPherson D."/>
            <person name="Merkulov G."/>
            <person name="Milshina N.V."/>
            <person name="Mobarry C."/>
            <person name="Morris J."/>
            <person name="Moshrefi A."/>
            <person name="Mount S.M."/>
            <person name="Moy M."/>
            <person name="Murphy B."/>
            <person name="Murphy L."/>
            <person name="Muzny D.M."/>
            <person name="Nelson D.L."/>
            <person name="Nelson D.R."/>
            <person name="Nelson K.A."/>
            <person name="Nixon K."/>
            <person name="Nusskern D.R."/>
            <person name="Pacleb J.M."/>
            <person name="Palazzolo M."/>
            <person name="Pittman G.S."/>
            <person name="Pan S."/>
            <person name="Pollard J."/>
            <person name="Puri V."/>
            <person name="Reese M.G."/>
            <person name="Reinert K."/>
            <person name="Remington K."/>
            <person name="Saunders R.D.C."/>
            <person name="Scheeler F."/>
            <person name="Shen H."/>
            <person name="Shue B.C."/>
            <person name="Siden-Kiamos I."/>
            <person name="Simpson M."/>
            <person name="Skupski M.P."/>
            <person name="Smith T.J."/>
            <person name="Spier E."/>
            <person name="Spradling A.C."/>
            <person name="Stapleton M."/>
            <person name="Strong R."/>
            <person name="Sun E."/>
            <person name="Svirskas R."/>
            <person name="Tector C."/>
            <person name="Turner R."/>
            <person name="Venter E."/>
            <person name="Wang A.H."/>
            <person name="Wang X."/>
            <person name="Wang Z.-Y."/>
            <person name="Wassarman D.A."/>
            <person name="Weinstock G.M."/>
            <person name="Weissenbach J."/>
            <person name="Williams S.M."/>
            <person name="Woodage T."/>
            <person name="Worley K.C."/>
            <person name="Wu D."/>
            <person name="Yang S."/>
            <person name="Yao Q.A."/>
            <person name="Ye J."/>
            <person name="Yeh R.-F."/>
            <person name="Zaveri J.S."/>
            <person name="Zhan M."/>
            <person name="Zhang G."/>
            <person name="Zhao Q."/>
            <person name="Zheng L."/>
            <person name="Zheng X.H."/>
            <person name="Zhong F.N."/>
            <person name="Zhong W."/>
            <person name="Zhou X."/>
            <person name="Zhu S.C."/>
            <person name="Zhu X."/>
            <person name="Smith H.O."/>
            <person name="Gibbs R.A."/>
            <person name="Myers E.W."/>
            <person name="Rubin G.M."/>
            <person name="Venter J.C."/>
        </authorList>
    </citation>
    <scope>NUCLEOTIDE SEQUENCE [LARGE SCALE GENOMIC DNA]</scope>
    <source>
        <strain evidence="5">Berkeley</strain>
    </source>
</reference>
<reference evidence="5" key="2">
    <citation type="journal article" date="2002" name="Genome Biol.">
        <title>Annotation of the Drosophila melanogaster euchromatic genome: a systematic review.</title>
        <authorList>
            <person name="Misra S."/>
            <person name="Crosby M.A."/>
            <person name="Mungall C.J."/>
            <person name="Matthews B.B."/>
            <person name="Campbell K.S."/>
            <person name="Hradecky P."/>
            <person name="Huang Y."/>
            <person name="Kaminker J.S."/>
            <person name="Millburn G.H."/>
            <person name="Prochnik S.E."/>
            <person name="Smith C.D."/>
            <person name="Tupy J.L."/>
            <person name="Whitfield E.J."/>
            <person name="Bayraktaroglu L."/>
            <person name="Berman B.P."/>
            <person name="Bettencourt B.R."/>
            <person name="Celniker S.E."/>
            <person name="de Grey A.D.N.J."/>
            <person name="Drysdale R.A."/>
            <person name="Harris N.L."/>
            <person name="Richter J."/>
            <person name="Russo S."/>
            <person name="Schroeder A.J."/>
            <person name="Shu S.Q."/>
            <person name="Stapleton M."/>
            <person name="Yamada C."/>
            <person name="Ashburner M."/>
            <person name="Gelbart W.M."/>
            <person name="Rubin G.M."/>
            <person name="Lewis S.E."/>
        </authorList>
    </citation>
    <scope>GENOME REANNOTATION</scope>
    <source>
        <strain evidence="5">Berkeley</strain>
    </source>
</reference>
<reference evidence="3" key="3">
    <citation type="submission" date="2005-05" db="EMBL/GenBank/DDBJ databases">
        <authorList>
            <person name="Stapleton M."/>
            <person name="Carlson J.W."/>
            <person name="Chavez C."/>
            <person name="Frise E."/>
            <person name="George R.A."/>
            <person name="Pacleb J.M."/>
            <person name="Park S."/>
            <person name="Wan K.H."/>
            <person name="Yu C."/>
            <person name="Celniker S.E."/>
        </authorList>
    </citation>
    <scope>NUCLEOTIDE SEQUENCE [LARGE SCALE MRNA]</scope>
    <source>
        <strain evidence="3">Berkeley</strain>
    </source>
</reference>
<dbReference type="EC" id="3.4.22.-"/>
<dbReference type="EMBL" id="AE013599">
    <property type="protein sequence ID" value="AAM70838.1"/>
    <property type="molecule type" value="Genomic_DNA"/>
</dbReference>
<dbReference type="EMBL" id="BT022279">
    <property type="protein sequence ID" value="AAY54695.1"/>
    <property type="molecule type" value="mRNA"/>
</dbReference>
<dbReference type="RefSeq" id="NP_001286151.1">
    <property type="nucleotide sequence ID" value="NM_001299222.1"/>
</dbReference>
<dbReference type="RefSeq" id="NP_724519.1">
    <property type="nucleotide sequence ID" value="NM_165499.2"/>
</dbReference>
<dbReference type="SMR" id="Q4V6M7"/>
<dbReference type="BioGRID" id="73058">
    <property type="interactions" value="2"/>
</dbReference>
<dbReference type="IntAct" id="Q4V6M7">
    <property type="interactions" value="1"/>
</dbReference>
<dbReference type="STRING" id="7227.FBpp0085517"/>
<dbReference type="MEROPS" id="C78.001"/>
<dbReference type="PaxDb" id="7227-FBpp0085517"/>
<dbReference type="DNASU" id="246489"/>
<dbReference type="EnsemblMetazoa" id="FBtr0086186">
    <property type="protein sequence ID" value="FBpp0085517"/>
    <property type="gene ID" value="FBgn0050157"/>
</dbReference>
<dbReference type="EnsemblMetazoa" id="FBtr0345010">
    <property type="protein sequence ID" value="FBpp0311261"/>
    <property type="gene ID" value="FBgn0050157"/>
</dbReference>
<dbReference type="GeneID" id="246489"/>
<dbReference type="KEGG" id="dme:Dmel_CG30157"/>
<dbReference type="AGR" id="FB:FBgn0050157"/>
<dbReference type="CTD" id="402682"/>
<dbReference type="FlyBase" id="FBgn0050157">
    <property type="gene designation" value="Ufsp1"/>
</dbReference>
<dbReference type="VEuPathDB" id="VectorBase:FBgn0050157"/>
<dbReference type="eggNOG" id="KOG2433">
    <property type="taxonomic scope" value="Eukaryota"/>
</dbReference>
<dbReference type="GeneTree" id="ENSGT00940000162936"/>
<dbReference type="HOGENOM" id="CLU_114366_0_0_1"/>
<dbReference type="InParanoid" id="Q4V6M7"/>
<dbReference type="OMA" id="AISWIIN"/>
<dbReference type="OrthoDB" id="417506at2759"/>
<dbReference type="PhylomeDB" id="Q4V6M7"/>
<dbReference type="BioGRID-ORCS" id="246489">
    <property type="hits" value="0 hits in 1 CRISPR screen"/>
</dbReference>
<dbReference type="GenomeRNAi" id="246489"/>
<dbReference type="PRO" id="PR:Q4V6M7"/>
<dbReference type="Proteomes" id="UP000000803">
    <property type="component" value="Chromosome 2R"/>
</dbReference>
<dbReference type="Bgee" id="FBgn0050157">
    <property type="expression patterns" value="Expressed in mid-late elongation-stage spermatid (Drosophila) in testis and 25 other cell types or tissues"/>
</dbReference>
<dbReference type="ExpressionAtlas" id="Q4V6M7">
    <property type="expression patterns" value="baseline and differential"/>
</dbReference>
<dbReference type="GO" id="GO:0071567">
    <property type="term" value="F:deUFMylase activity"/>
    <property type="evidence" value="ECO:0000250"/>
    <property type="project" value="UniProtKB"/>
</dbReference>
<dbReference type="GO" id="GO:0006508">
    <property type="term" value="P:proteolysis"/>
    <property type="evidence" value="ECO:0007669"/>
    <property type="project" value="UniProtKB-KW"/>
</dbReference>
<dbReference type="FunFam" id="3.90.70.130:FF:000003">
    <property type="entry name" value="Probable Ufm1-specific protease 1"/>
    <property type="match status" value="1"/>
</dbReference>
<dbReference type="Gene3D" id="3.90.70.130">
    <property type="match status" value="1"/>
</dbReference>
<dbReference type="InterPro" id="IPR012462">
    <property type="entry name" value="UfSP1/2_DUB_cat"/>
</dbReference>
<dbReference type="PANTHER" id="PTHR48153:SF3">
    <property type="entry name" value="INACTIVE UFM1-SPECIFIC PROTEASE 1"/>
    <property type="match status" value="1"/>
</dbReference>
<dbReference type="PANTHER" id="PTHR48153">
    <property type="entry name" value="UFM1-SPECIFIC PROTEASE 2"/>
    <property type="match status" value="1"/>
</dbReference>
<dbReference type="Pfam" id="PF07910">
    <property type="entry name" value="Peptidase_C78"/>
    <property type="match status" value="1"/>
</dbReference>
<comment type="function">
    <text evidence="1">Thiol protease which recognizes and hydrolyzes the peptide bond at the C-terminal Gly of UFM1, a ubiquitin-like modifier protein bound to a number of target proteins.</text>
</comment>
<comment type="interaction">
    <interactant intactId="EBI-15116415">
        <id>Q4V6M7</id>
    </interactant>
    <interactant intactId="EBI-15116417">
        <id>A8DYH2</id>
        <label>Ufm1</label>
    </interactant>
    <organismsDiffer>false</organismsDiffer>
    <experiments>4</experiments>
</comment>
<comment type="similarity">
    <text evidence="2">Belongs to the peptidase C78 family.</text>
</comment>
<accession>Q4V6M7</accession>
<gene>
    <name evidence="4" type="primary">Ufsp1</name>
    <name evidence="4" type="ORF">CG30157</name>
</gene>
<keyword id="KW-0378">Hydrolase</keyword>
<keyword id="KW-0645">Protease</keyword>
<keyword id="KW-1185">Reference proteome</keyword>
<keyword id="KW-0788">Thiol protease</keyword>
<keyword id="KW-0833">Ubl conjugation pathway</keyword>
<feature type="chain" id="PRO_0000280371" description="Probable Ufm1-specific protease 1">
    <location>
        <begin position="1"/>
        <end position="234"/>
    </location>
</feature>
<feature type="active site" evidence="1">
    <location>
        <position position="70"/>
    </location>
</feature>
<feature type="active site" evidence="1">
    <location>
        <position position="194"/>
    </location>
</feature>
<feature type="active site" evidence="1">
    <location>
        <position position="196"/>
    </location>
</feature>
<proteinExistence type="evidence at protein level"/>
<sequence length="234" mass="25791">MAAEKCAEEFGDSSAASLKIVPKDYAYPLLEDPQGALTTPTEGGRTLVTRGGFNYFHYGCDGHQDAGWGCGYRTLQSAISWIQRRQGSSGHVPSIREIQQILVAIGDKGPEFVGSRDWIGTLEEFYVIDVLHQVPCKILHAKELSSDEILGELRSYFEKYQGFVAMGGLSDTASKAITGYHCSARGRIFLQVVDPHFVGVPSSRQHLIDLGYVRWVPVDEFAGSTYNLCLILQP</sequence>
<organism evidence="5">
    <name type="scientific">Drosophila melanogaster</name>
    <name type="common">Fruit fly</name>
    <dbReference type="NCBI Taxonomy" id="7227"/>
    <lineage>
        <taxon>Eukaryota</taxon>
        <taxon>Metazoa</taxon>
        <taxon>Ecdysozoa</taxon>
        <taxon>Arthropoda</taxon>
        <taxon>Hexapoda</taxon>
        <taxon>Insecta</taxon>
        <taxon>Pterygota</taxon>
        <taxon>Neoptera</taxon>
        <taxon>Endopterygota</taxon>
        <taxon>Diptera</taxon>
        <taxon>Brachycera</taxon>
        <taxon>Muscomorpha</taxon>
        <taxon>Ephydroidea</taxon>
        <taxon>Drosophilidae</taxon>
        <taxon>Drosophila</taxon>
        <taxon>Sophophora</taxon>
    </lineage>
</organism>